<reference key="1">
    <citation type="journal article" date="1998" name="Nature">
        <title>Deciphering the biology of Mycobacterium tuberculosis from the complete genome sequence.</title>
        <authorList>
            <person name="Cole S.T."/>
            <person name="Brosch R."/>
            <person name="Parkhill J."/>
            <person name="Garnier T."/>
            <person name="Churcher C.M."/>
            <person name="Harris D.E."/>
            <person name="Gordon S.V."/>
            <person name="Eiglmeier K."/>
            <person name="Gas S."/>
            <person name="Barry C.E. III"/>
            <person name="Tekaia F."/>
            <person name="Badcock K."/>
            <person name="Basham D."/>
            <person name="Brown D."/>
            <person name="Chillingworth T."/>
            <person name="Connor R."/>
            <person name="Davies R.M."/>
            <person name="Devlin K."/>
            <person name="Feltwell T."/>
            <person name="Gentles S."/>
            <person name="Hamlin N."/>
            <person name="Holroyd S."/>
            <person name="Hornsby T."/>
            <person name="Jagels K."/>
            <person name="Krogh A."/>
            <person name="McLean J."/>
            <person name="Moule S."/>
            <person name="Murphy L.D."/>
            <person name="Oliver S."/>
            <person name="Osborne J."/>
            <person name="Quail M.A."/>
            <person name="Rajandream M.A."/>
            <person name="Rogers J."/>
            <person name="Rutter S."/>
            <person name="Seeger K."/>
            <person name="Skelton S."/>
            <person name="Squares S."/>
            <person name="Squares R."/>
            <person name="Sulston J.E."/>
            <person name="Taylor K."/>
            <person name="Whitehead S."/>
            <person name="Barrell B.G."/>
        </authorList>
    </citation>
    <scope>NUCLEOTIDE SEQUENCE [LARGE SCALE GENOMIC DNA]</scope>
    <source>
        <strain>ATCC 25618 / H37Rv</strain>
    </source>
</reference>
<reference key="2">
    <citation type="journal article" date="2004" name="J. Bacteriol.">
        <title>Induction of a novel class of diacylglycerol acyltransferases and triacylglycerol accumulation in Mycobacterium tuberculosis as it goes into a dormancy-like state in culture.</title>
        <authorList>
            <person name="Daniel J."/>
            <person name="Deb C."/>
            <person name="Dubey V.S."/>
            <person name="Sirakova T.D."/>
            <person name="Abomoelak B."/>
            <person name="Morbidoni H.R."/>
            <person name="Kolattukudy P.E."/>
        </authorList>
    </citation>
    <scope>FUNCTION IN E.COLI</scope>
    <scope>CATALYTIC ACTIVITY</scope>
    <scope>PH DEPENDENCE</scope>
    <scope>INDUCTION BY HYPOXIA</scope>
    <scope>BY NITRIC OXIDE (NO)</scope>
    <source>
        <strain>ATCC 25618 / H37Rv</strain>
    </source>
</reference>
<reference key="3">
    <citation type="journal article" date="2011" name="Mol. Cell. Proteomics">
        <title>Proteogenomic analysis of Mycobacterium tuberculosis by high resolution mass spectrometry.</title>
        <authorList>
            <person name="Kelkar D.S."/>
            <person name="Kumar D."/>
            <person name="Kumar P."/>
            <person name="Balakrishnan L."/>
            <person name="Muthusamy B."/>
            <person name="Yadav A.K."/>
            <person name="Shrivastava P."/>
            <person name="Marimuthu A."/>
            <person name="Anand S."/>
            <person name="Sundaram H."/>
            <person name="Kingsbury R."/>
            <person name="Harsha H.C."/>
            <person name="Nair B."/>
            <person name="Prasad T.S."/>
            <person name="Chauhan D.S."/>
            <person name="Katoch K."/>
            <person name="Katoch V.M."/>
            <person name="Kumar P."/>
            <person name="Chaerkady R."/>
            <person name="Ramachandran S."/>
            <person name="Dash D."/>
            <person name="Pandey A."/>
        </authorList>
    </citation>
    <scope>IDENTIFICATION BY MASS SPECTROMETRY [LARGE SCALE ANALYSIS]</scope>
    <source>
        <strain>ATCC 25618 / H37Rv</strain>
    </source>
</reference>
<accession>P9WKC7</accession>
<accession>L0TGD2</accession>
<accession>O69701</accession>
<accession>P67210</accession>
<organism>
    <name type="scientific">Mycobacterium tuberculosis (strain ATCC 25618 / H37Rv)</name>
    <dbReference type="NCBI Taxonomy" id="83332"/>
    <lineage>
        <taxon>Bacteria</taxon>
        <taxon>Bacillati</taxon>
        <taxon>Actinomycetota</taxon>
        <taxon>Actinomycetes</taxon>
        <taxon>Mycobacteriales</taxon>
        <taxon>Mycobacteriaceae</taxon>
        <taxon>Mycobacterium</taxon>
        <taxon>Mycobacterium tuberculosis complex</taxon>
    </lineage>
</organism>
<name>TGS2_MYCTU</name>
<comment type="function">
    <text evidence="1">Catalyzes the terminal and only committed step in triacylglycerol synthesis by using diacylglycerol and fatty acyl CoA as substrates. Required for storage lipid synthesis.</text>
</comment>
<comment type="function">
    <text evidence="3">Upon expression in E.coli functions as a triacylglycerol synthase, making triacylglycerol (TG) from diolein and long-chain fatty acyl-CoA. Also functions as a wax synthase, incorporating palmityl alcohol into wax esters in the presence of palmitoyl-CoA.</text>
</comment>
<comment type="catalytic activity">
    <reaction evidence="3">
        <text>an acyl-CoA + a 1,2-diacyl-sn-glycerol = a triacyl-sn-glycerol + CoA</text>
        <dbReference type="Rhea" id="RHEA:10868"/>
        <dbReference type="ChEBI" id="CHEBI:17815"/>
        <dbReference type="ChEBI" id="CHEBI:57287"/>
        <dbReference type="ChEBI" id="CHEBI:58342"/>
        <dbReference type="ChEBI" id="CHEBI:64615"/>
        <dbReference type="EC" id="2.3.1.20"/>
    </reaction>
</comment>
<comment type="catalytic activity">
    <reaction evidence="3">
        <text>a long chain fatty alcohol + a fatty acyl-CoA = a wax ester + CoA</text>
        <dbReference type="Rhea" id="RHEA:38443"/>
        <dbReference type="ChEBI" id="CHEBI:10036"/>
        <dbReference type="ChEBI" id="CHEBI:17135"/>
        <dbReference type="ChEBI" id="CHEBI:57287"/>
        <dbReference type="ChEBI" id="CHEBI:77636"/>
        <dbReference type="EC" id="2.3.1.75"/>
    </reaction>
</comment>
<comment type="catalytic activity">
    <reaction evidence="3">
        <text>di-(9Z)-octadecenoylglycerol + (9Z)-octadecenoyl-CoA = 1,2,3-tri-(9Z-octadecenoyl)-glycerol + CoA</text>
        <dbReference type="Rhea" id="RHEA:45780"/>
        <dbReference type="ChEBI" id="CHEBI:53753"/>
        <dbReference type="ChEBI" id="CHEBI:57287"/>
        <dbReference type="ChEBI" id="CHEBI:57387"/>
        <dbReference type="ChEBI" id="CHEBI:75945"/>
    </reaction>
    <physiologicalReaction direction="left-to-right" evidence="3">
        <dbReference type="Rhea" id="RHEA:45781"/>
    </physiologicalReaction>
</comment>
<comment type="catalytic activity">
    <reaction evidence="3">
        <text>hexadecan-1-ol + hexadecanoyl-CoA = hexadecanyl hexadecanoate + CoA</text>
        <dbReference type="Rhea" id="RHEA:38167"/>
        <dbReference type="ChEBI" id="CHEBI:16125"/>
        <dbReference type="ChEBI" id="CHEBI:57287"/>
        <dbReference type="ChEBI" id="CHEBI:57379"/>
        <dbReference type="ChEBI" id="CHEBI:75584"/>
    </reaction>
    <physiologicalReaction direction="left-to-right" evidence="3">
        <dbReference type="Rhea" id="RHEA:38168"/>
    </physiologicalReaction>
</comment>
<comment type="biophysicochemical properties">
    <phDependence>
        <text evidence="3">Optimum pH is 6.5-7.2.</text>
    </phDependence>
</comment>
<comment type="pathway">
    <text>Glycerolipid metabolism; triacylglycerol biosynthesis.</text>
</comment>
<comment type="induction">
    <text evidence="3">A possible member of the dormancy regulon. Slightly induced in response to reduced oxygen tension (hypoxia) and by low levels of nitric oxide (NO). It is hoped that this regulon will give insight into the latent, or dormant phase of infection.</text>
</comment>
<comment type="similarity">
    <text evidence="4">Belongs to the long-chain O-acyltransferase family.</text>
</comment>
<feature type="chain" id="PRO_0000222921" description="Probable diacyglycerol O-acyltransferase tgs2">
    <location>
        <begin position="1"/>
        <end position="454"/>
    </location>
</feature>
<feature type="active site" description="Proton acceptor" evidence="2">
    <location>
        <position position="139"/>
    </location>
</feature>
<protein>
    <recommendedName>
        <fullName>Probable diacyglycerol O-acyltransferase tgs2</fullName>
        <shortName>TGS2</shortName>
    </recommendedName>
    <alternativeName>
        <fullName>Diacylglycerol O-acyltransferase</fullName>
        <shortName>DGAT</shortName>
        <ecNumber evidence="3">2.3.1.20</ecNumber>
    </alternativeName>
    <alternativeName>
        <fullName>Long-chain-alcohol O-fatty-acyltransferase</fullName>
        <ecNumber evidence="3">2.3.1.75</ecNumber>
    </alternativeName>
    <alternativeName>
        <fullName>Probable triacylglycerol synthase tgs2</fullName>
    </alternativeName>
    <alternativeName>
        <fullName>Wax ester synthase/acyl-CoA:diacylglycerol acyltransferase</fullName>
    </alternativeName>
    <alternativeName>
        <fullName>Wax synthase</fullName>
        <shortName>WS</shortName>
    </alternativeName>
</protein>
<proteinExistence type="evidence at protein level"/>
<gene>
    <name type="primary">tgs2</name>
    <name type="ordered locus">Rv3734c</name>
    <name type="ORF">MTV025.082c</name>
</gene>
<keyword id="KW-0012">Acyltransferase</keyword>
<keyword id="KW-0319">Glycerol metabolism</keyword>
<keyword id="KW-0444">Lipid biosynthesis</keyword>
<keyword id="KW-0443">Lipid metabolism</keyword>
<keyword id="KW-1185">Reference proteome</keyword>
<keyword id="KW-0808">Transferase</keyword>
<dbReference type="EC" id="2.3.1.20" evidence="3"/>
<dbReference type="EC" id="2.3.1.75" evidence="3"/>
<dbReference type="EMBL" id="AL123456">
    <property type="protein sequence ID" value="CCP46561.1"/>
    <property type="molecule type" value="Genomic_DNA"/>
</dbReference>
<dbReference type="PIR" id="G70797">
    <property type="entry name" value="G70797"/>
</dbReference>
<dbReference type="RefSeq" id="NP_218251.1">
    <property type="nucleotide sequence ID" value="NC_000962.3"/>
</dbReference>
<dbReference type="RefSeq" id="WP_003420440.1">
    <property type="nucleotide sequence ID" value="NZ_NVQJ01000009.1"/>
</dbReference>
<dbReference type="SMR" id="P9WKC7"/>
<dbReference type="STRING" id="83332.Rv3734c"/>
<dbReference type="SwissLipids" id="SLP:000001147"/>
<dbReference type="PaxDb" id="83332-Rv3734c"/>
<dbReference type="DNASU" id="885335"/>
<dbReference type="GeneID" id="885335"/>
<dbReference type="KEGG" id="mtu:Rv3734c"/>
<dbReference type="KEGG" id="mtv:RVBD_3734c"/>
<dbReference type="TubercuList" id="Rv3734c"/>
<dbReference type="eggNOG" id="COG1020">
    <property type="taxonomic scope" value="Bacteria"/>
</dbReference>
<dbReference type="InParanoid" id="P9WKC7"/>
<dbReference type="OrthoDB" id="9810950at2"/>
<dbReference type="PhylomeDB" id="P9WKC7"/>
<dbReference type="BRENDA" id="2.3.1.20">
    <property type="organism ID" value="3445"/>
</dbReference>
<dbReference type="UniPathway" id="UPA00282"/>
<dbReference type="Proteomes" id="UP000001584">
    <property type="component" value="Chromosome"/>
</dbReference>
<dbReference type="GO" id="GO:0005886">
    <property type="term" value="C:plasma membrane"/>
    <property type="evidence" value="ECO:0007005"/>
    <property type="project" value="MTBBASE"/>
</dbReference>
<dbReference type="GO" id="GO:0004144">
    <property type="term" value="F:diacylglycerol O-acyltransferase activity"/>
    <property type="evidence" value="ECO:0000314"/>
    <property type="project" value="MTBBASE"/>
</dbReference>
<dbReference type="GO" id="GO:0047196">
    <property type="term" value="F:long-chain-alcohol O-fatty-acyltransferase activity"/>
    <property type="evidence" value="ECO:0007669"/>
    <property type="project" value="UniProtKB-EC"/>
</dbReference>
<dbReference type="GO" id="GO:0008374">
    <property type="term" value="F:O-acyltransferase activity"/>
    <property type="evidence" value="ECO:0000318"/>
    <property type="project" value="GO_Central"/>
</dbReference>
<dbReference type="GO" id="GO:0051701">
    <property type="term" value="P:biological process involved in interaction with host"/>
    <property type="evidence" value="ECO:0000318"/>
    <property type="project" value="GO_Central"/>
</dbReference>
<dbReference type="GO" id="GO:0006071">
    <property type="term" value="P:glycerol metabolic process"/>
    <property type="evidence" value="ECO:0007669"/>
    <property type="project" value="UniProtKB-KW"/>
</dbReference>
<dbReference type="GO" id="GO:0045017">
    <property type="term" value="P:glycerolipid biosynthetic process"/>
    <property type="evidence" value="ECO:0000314"/>
    <property type="project" value="MTBBASE"/>
</dbReference>
<dbReference type="GO" id="GO:0001666">
    <property type="term" value="P:response to hypoxia"/>
    <property type="evidence" value="ECO:0000270"/>
    <property type="project" value="MTBBASE"/>
</dbReference>
<dbReference type="GO" id="GO:0071731">
    <property type="term" value="P:response to nitric oxide"/>
    <property type="evidence" value="ECO:0000270"/>
    <property type="project" value="MTBBASE"/>
</dbReference>
<dbReference type="GO" id="GO:0019432">
    <property type="term" value="P:triglyceride biosynthetic process"/>
    <property type="evidence" value="ECO:0000314"/>
    <property type="project" value="MTBBASE"/>
</dbReference>
<dbReference type="InterPro" id="IPR014292">
    <property type="entry name" value="Acyl_transf_WS/DGAT"/>
</dbReference>
<dbReference type="InterPro" id="IPR045034">
    <property type="entry name" value="O-acyltransferase_WSD1-like"/>
</dbReference>
<dbReference type="InterPro" id="IPR009721">
    <property type="entry name" value="O-acyltransferase_WSD1_C"/>
</dbReference>
<dbReference type="InterPro" id="IPR004255">
    <property type="entry name" value="O-acyltransferase_WSD1_N"/>
</dbReference>
<dbReference type="NCBIfam" id="TIGR02946">
    <property type="entry name" value="acyl_WS_DGAT"/>
    <property type="match status" value="1"/>
</dbReference>
<dbReference type="PANTHER" id="PTHR31650">
    <property type="entry name" value="O-ACYLTRANSFERASE (WSD1-LIKE) FAMILY PROTEIN"/>
    <property type="match status" value="1"/>
</dbReference>
<dbReference type="PANTHER" id="PTHR31650:SF1">
    <property type="entry name" value="WAX ESTER SYNTHASE_DIACYLGLYCEROL ACYLTRANSFERASE 4-RELATED"/>
    <property type="match status" value="1"/>
</dbReference>
<dbReference type="Pfam" id="PF06974">
    <property type="entry name" value="WS_DGAT_C"/>
    <property type="match status" value="1"/>
</dbReference>
<dbReference type="Pfam" id="PF03007">
    <property type="entry name" value="WS_DGAT_cat"/>
    <property type="match status" value="1"/>
</dbReference>
<dbReference type="SUPFAM" id="SSF52777">
    <property type="entry name" value="CoA-dependent acyltransferases"/>
    <property type="match status" value="1"/>
</dbReference>
<sequence>MDLMMPNDSMFLFIESREHPMHVGGLSLFEPPQGAGPEFVREFTERLVANDEFQPMFRKHPATIGGGIARVAWAYDDDIDIDYHVRRSALPSPGRVRDLLELTSRLHTSLLDRHRPLWELHVVEGLNDGRFAMYTKMHHALIDGVSAMKLAQRTLSADPDDAEVRAIWNLPPRPRTRPPSDGSSLLDALFKMAGSVVGLAPSTLKLARAALLEQQLTLPFAAPHSMFNVKVGGARRCAAQSWSLDRIKSVKQAAGVTVNDAVLAMCAGALRYYLIERNALPDRPLIAMVPVSLRSKEDADAGGNLVGSVLCNLATHVDDPAQRIQTISASMDGNKKVLSELPQLQVLALSALNMAPLTLAGVPGFLSAVPPPFNIVISNVPGPVDPLYYGTARLDGSYPLSNIPDGQALNITLVNNAGNLDFGLVGCRRSVPHLQRLLAHLESSLKDLEQAVGI</sequence>
<evidence type="ECO:0000250" key="1">
    <source>
        <dbReference type="UniProtKB" id="P9WKC9"/>
    </source>
</evidence>
<evidence type="ECO:0000255" key="2"/>
<evidence type="ECO:0000269" key="3">
    <source>
    </source>
</evidence>
<evidence type="ECO:0000305" key="4"/>